<reference key="1">
    <citation type="submission" date="2003-11" db="EMBL/GenBank/DDBJ databases">
        <authorList>
            <consortium name="NIH - Xenopus Gene Collection (XGC) project"/>
        </authorList>
    </citation>
    <scope>NUCLEOTIDE SEQUENCE [LARGE SCALE MRNA]</scope>
    <source>
        <tissue>Embryo</tissue>
    </source>
</reference>
<sequence length="178" mass="20366">MTSLRPFTCDDLFRFNNINLDPLTETYGIPFYLQYLAHWPEYFIVAEAPGGELMGYIMGKAEGSVAREEWHGHVTALSVAPEFRRLGLAAKLMELLEEISERKGGFFVDLFVRVSNQVAVNMYKQLGYSVYRTVIEYYSASNGEPDEDAYDMRKALSRDTEKKSIVPLPHPVRPEDIE</sequence>
<dbReference type="EC" id="2.3.1.254" evidence="2"/>
<dbReference type="EMBL" id="BC062502">
    <property type="protein sequence ID" value="AAH62502.1"/>
    <property type="molecule type" value="mRNA"/>
</dbReference>
<dbReference type="RefSeq" id="NP_989110.1">
    <property type="nucleotide sequence ID" value="NM_203779.1"/>
</dbReference>
<dbReference type="RefSeq" id="XP_012818293.1">
    <property type="nucleotide sequence ID" value="XM_012962839.3"/>
</dbReference>
<dbReference type="SMR" id="Q6P632"/>
<dbReference type="FunCoup" id="Q6P632">
    <property type="interactions" value="3006"/>
</dbReference>
<dbReference type="STRING" id="8364.ENSXETP00000014577"/>
<dbReference type="GeneID" id="394715"/>
<dbReference type="KEGG" id="xtr:394715"/>
<dbReference type="AGR" id="Xenbase:XB-GENE-969863"/>
<dbReference type="CTD" id="51126"/>
<dbReference type="Xenbase" id="XB-GENE-969863">
    <property type="gene designation" value="naa20"/>
</dbReference>
<dbReference type="InParanoid" id="Q6P632"/>
<dbReference type="OMA" id="EQHPSMR"/>
<dbReference type="OrthoDB" id="10264728at2759"/>
<dbReference type="Proteomes" id="UP000008143">
    <property type="component" value="Chromosome 5"/>
</dbReference>
<dbReference type="Bgee" id="ENSXETG00000037147">
    <property type="expression patterns" value="Expressed in egg cell and 14 other cell types or tissues"/>
</dbReference>
<dbReference type="ExpressionAtlas" id="Q6P632">
    <property type="expression patterns" value="differential"/>
</dbReference>
<dbReference type="GO" id="GO:0005737">
    <property type="term" value="C:cytoplasm"/>
    <property type="evidence" value="ECO:0000250"/>
    <property type="project" value="UniProtKB"/>
</dbReference>
<dbReference type="GO" id="GO:0005634">
    <property type="term" value="C:nucleus"/>
    <property type="evidence" value="ECO:0000250"/>
    <property type="project" value="UniProtKB"/>
</dbReference>
<dbReference type="GO" id="GO:0120518">
    <property type="term" value="F:protein N-terminal-methionine acetyltransferase activity"/>
    <property type="evidence" value="ECO:0007669"/>
    <property type="project" value="UniProtKB-EC"/>
</dbReference>
<dbReference type="GO" id="GO:0017190">
    <property type="term" value="P:N-terminal peptidyl-aspartic acid acetylation"/>
    <property type="evidence" value="ECO:0000250"/>
    <property type="project" value="UniProtKB"/>
</dbReference>
<dbReference type="GO" id="GO:0018002">
    <property type="term" value="P:N-terminal peptidyl-glutamic acid acetylation"/>
    <property type="evidence" value="ECO:0000250"/>
    <property type="project" value="UniProtKB"/>
</dbReference>
<dbReference type="GO" id="GO:0017192">
    <property type="term" value="P:N-terminal peptidyl-glutamine acetylation"/>
    <property type="evidence" value="ECO:0000250"/>
    <property type="project" value="UniProtKB"/>
</dbReference>
<dbReference type="GO" id="GO:0006474">
    <property type="term" value="P:N-terminal protein amino acid acetylation"/>
    <property type="evidence" value="ECO:0000250"/>
    <property type="project" value="UniProtKB"/>
</dbReference>
<dbReference type="CDD" id="cd04301">
    <property type="entry name" value="NAT_SF"/>
    <property type="match status" value="1"/>
</dbReference>
<dbReference type="FunFam" id="3.40.630.30:FF:000015">
    <property type="entry name" value="N-alpha-acetyltransferase 20 isoform X1"/>
    <property type="match status" value="1"/>
</dbReference>
<dbReference type="Gene3D" id="3.40.630.30">
    <property type="match status" value="1"/>
</dbReference>
<dbReference type="InterPro" id="IPR016181">
    <property type="entry name" value="Acyl_CoA_acyltransferase"/>
</dbReference>
<dbReference type="InterPro" id="IPR000182">
    <property type="entry name" value="GNAT_dom"/>
</dbReference>
<dbReference type="InterPro" id="IPR051646">
    <property type="entry name" value="NatB_acetyltransferase_subunit"/>
</dbReference>
<dbReference type="PANTHER" id="PTHR45910">
    <property type="entry name" value="N-ALPHA-ACETYLTRANSFERASE 20"/>
    <property type="match status" value="1"/>
</dbReference>
<dbReference type="PANTHER" id="PTHR45910:SF1">
    <property type="entry name" value="N-ALPHA-ACETYLTRANSFERASE 20"/>
    <property type="match status" value="1"/>
</dbReference>
<dbReference type="Pfam" id="PF00583">
    <property type="entry name" value="Acetyltransf_1"/>
    <property type="match status" value="1"/>
</dbReference>
<dbReference type="SUPFAM" id="SSF55729">
    <property type="entry name" value="Acyl-CoA N-acyltransferases (Nat)"/>
    <property type="match status" value="1"/>
</dbReference>
<dbReference type="PROSITE" id="PS51186">
    <property type="entry name" value="GNAT"/>
    <property type="match status" value="1"/>
</dbReference>
<organism>
    <name type="scientific">Xenopus tropicalis</name>
    <name type="common">Western clawed frog</name>
    <name type="synonym">Silurana tropicalis</name>
    <dbReference type="NCBI Taxonomy" id="8364"/>
    <lineage>
        <taxon>Eukaryota</taxon>
        <taxon>Metazoa</taxon>
        <taxon>Chordata</taxon>
        <taxon>Craniata</taxon>
        <taxon>Vertebrata</taxon>
        <taxon>Euteleostomi</taxon>
        <taxon>Amphibia</taxon>
        <taxon>Batrachia</taxon>
        <taxon>Anura</taxon>
        <taxon>Pipoidea</taxon>
        <taxon>Pipidae</taxon>
        <taxon>Xenopodinae</taxon>
        <taxon>Xenopus</taxon>
        <taxon>Silurana</taxon>
    </lineage>
</organism>
<gene>
    <name type="primary">naa20</name>
    <name type="synonym">nat5</name>
</gene>
<name>NAA20_XENTR</name>
<accession>Q6P632</accession>
<keyword id="KW-0012">Acyltransferase</keyword>
<keyword id="KW-0963">Cytoplasm</keyword>
<keyword id="KW-0539">Nucleus</keyword>
<keyword id="KW-1185">Reference proteome</keyword>
<keyword id="KW-0808">Transferase</keyword>
<comment type="function">
    <text evidence="2">Catalytic subunit of the NatB complex which catalyzes acetylation of the N-terminal methionine residues of peptides beginning with Met-Asp, Met-Glu, Met-Asn and Met-Gln. Proteins with cell cycle functions are overrepresented in the pool of NatB substrates. Required for maintaining the structure and function of actomyosin fibers and for proper cellular migration.</text>
</comment>
<comment type="catalytic activity">
    <reaction evidence="2">
        <text>N-terminal L-methionyl-L-asparaginyl-[protein] + acetyl-CoA = N-terminal N(alpha)-acetyl-L-methionyl-L-asparaginyl-[protein] + CoA + H(+)</text>
        <dbReference type="Rhea" id="RHEA:50484"/>
        <dbReference type="Rhea" id="RHEA-COMP:12694"/>
        <dbReference type="Rhea" id="RHEA-COMP:12695"/>
        <dbReference type="ChEBI" id="CHEBI:15378"/>
        <dbReference type="ChEBI" id="CHEBI:57287"/>
        <dbReference type="ChEBI" id="CHEBI:57288"/>
        <dbReference type="ChEBI" id="CHEBI:133356"/>
        <dbReference type="ChEBI" id="CHEBI:133358"/>
        <dbReference type="EC" id="2.3.1.254"/>
    </reaction>
</comment>
<comment type="catalytic activity">
    <reaction evidence="2">
        <text>N-terminal L-methionyl-L-glutaminyl-[protein] + acetyl-CoA = N-terminal N(alpha)-acetyl-L-methionyl-L-glutaminyl-[protein] + CoA + H(+)</text>
        <dbReference type="Rhea" id="RHEA:50492"/>
        <dbReference type="Rhea" id="RHEA-COMP:12698"/>
        <dbReference type="Rhea" id="RHEA-COMP:12699"/>
        <dbReference type="ChEBI" id="CHEBI:15378"/>
        <dbReference type="ChEBI" id="CHEBI:57287"/>
        <dbReference type="ChEBI" id="CHEBI:57288"/>
        <dbReference type="ChEBI" id="CHEBI:133361"/>
        <dbReference type="ChEBI" id="CHEBI:133362"/>
        <dbReference type="EC" id="2.3.1.254"/>
    </reaction>
</comment>
<comment type="catalytic activity">
    <reaction evidence="2">
        <text>N-terminal L-methionyl-L-aspartyl-[protein] + acetyl-CoA = N-terminal N(alpha)-acetyl-L-methionyl-L-aspartyl-[protein] + CoA + H(+)</text>
        <dbReference type="Rhea" id="RHEA:50480"/>
        <dbReference type="Rhea" id="RHEA-COMP:12692"/>
        <dbReference type="Rhea" id="RHEA-COMP:12693"/>
        <dbReference type="ChEBI" id="CHEBI:15378"/>
        <dbReference type="ChEBI" id="CHEBI:57287"/>
        <dbReference type="ChEBI" id="CHEBI:57288"/>
        <dbReference type="ChEBI" id="CHEBI:133045"/>
        <dbReference type="ChEBI" id="CHEBI:133063"/>
        <dbReference type="EC" id="2.3.1.254"/>
    </reaction>
</comment>
<comment type="catalytic activity">
    <reaction evidence="2">
        <text>N-terminal L-methionyl-L-glutamyl-[protein] + acetyl-CoA = N-terminal N(alpha)-acetyl-L-methionyl-L-glutamyl-[protein] + CoA + H(+)</text>
        <dbReference type="Rhea" id="RHEA:50488"/>
        <dbReference type="Rhea" id="RHEA-COMP:12696"/>
        <dbReference type="Rhea" id="RHEA-COMP:12697"/>
        <dbReference type="ChEBI" id="CHEBI:15378"/>
        <dbReference type="ChEBI" id="CHEBI:57287"/>
        <dbReference type="ChEBI" id="CHEBI:57288"/>
        <dbReference type="ChEBI" id="CHEBI:133359"/>
        <dbReference type="ChEBI" id="CHEBI:133360"/>
        <dbReference type="EC" id="2.3.1.254"/>
    </reaction>
</comment>
<comment type="subunit">
    <text evidence="1">Component of the N-terminal acetyltransferase B (NatB) complex which is composed of naa20 and naa25.</text>
</comment>
<comment type="subcellular location">
    <subcellularLocation>
        <location evidence="2">Cytoplasm</location>
    </subcellularLocation>
    <subcellularLocation>
        <location evidence="2">Nucleus</location>
    </subcellularLocation>
</comment>
<comment type="similarity">
    <text evidence="5">Belongs to the acetyltransferase family. ARD1 subfamily.</text>
</comment>
<protein>
    <recommendedName>
        <fullName>N-alpha-acetyltransferase 20</fullName>
        <ecNumber evidence="2">2.3.1.254</ecNumber>
    </recommendedName>
    <alternativeName>
        <fullName>Methionine N-acetyltransferase</fullName>
    </alternativeName>
    <alternativeName>
        <fullName>N-acetyltransferase 5</fullName>
    </alternativeName>
    <alternativeName>
        <fullName>N-terminal acetyltransferase B complex catalytic subunit NAA20</fullName>
    </alternativeName>
    <alternativeName>
        <fullName>N-terminal acetyltransferase B complex catalytic subunit NAT5</fullName>
        <shortName>NatB complex subunit NAT5</shortName>
    </alternativeName>
    <alternativeName>
        <fullName>NatB catalytic subunit</fullName>
    </alternativeName>
</protein>
<evidence type="ECO:0000250" key="1"/>
<evidence type="ECO:0000250" key="2">
    <source>
        <dbReference type="UniProtKB" id="P61599"/>
    </source>
</evidence>
<evidence type="ECO:0000255" key="3">
    <source>
        <dbReference type="PROSITE-ProRule" id="PRU00532"/>
    </source>
</evidence>
<evidence type="ECO:0000256" key="4">
    <source>
        <dbReference type="SAM" id="MobiDB-lite"/>
    </source>
</evidence>
<evidence type="ECO:0000305" key="5"/>
<feature type="chain" id="PRO_0000249843" description="N-alpha-acetyltransferase 20">
    <location>
        <begin position="1"/>
        <end position="178"/>
    </location>
</feature>
<feature type="domain" description="N-acetyltransferase" evidence="3">
    <location>
        <begin position="2"/>
        <end position="157"/>
    </location>
</feature>
<feature type="region of interest" description="Disordered" evidence="4">
    <location>
        <begin position="159"/>
        <end position="178"/>
    </location>
</feature>
<proteinExistence type="evidence at transcript level"/>